<comment type="function">
    <text evidence="1">Decomposes hydrogen peroxide into water and oxygen; serves to protect cells from the toxic effects of hydrogen peroxide.</text>
</comment>
<comment type="catalytic activity">
    <reaction evidence="2">
        <text>2 H2O2 = O2 + 2 H2O</text>
        <dbReference type="Rhea" id="RHEA:20309"/>
        <dbReference type="ChEBI" id="CHEBI:15377"/>
        <dbReference type="ChEBI" id="CHEBI:15379"/>
        <dbReference type="ChEBI" id="CHEBI:16240"/>
        <dbReference type="EC" id="1.11.1.6"/>
    </reaction>
</comment>
<comment type="cofactor">
    <cofactor evidence="1">
        <name>heme</name>
        <dbReference type="ChEBI" id="CHEBI:30413"/>
    </cofactor>
</comment>
<comment type="subunit">
    <text evidence="1">Homodimer.</text>
</comment>
<comment type="similarity">
    <text evidence="4">Belongs to the catalase family.</text>
</comment>
<dbReference type="EC" id="1.11.1.6"/>
<dbReference type="EMBL" id="BX571856">
    <property type="protein sequence ID" value="CAG40343.1"/>
    <property type="molecule type" value="Genomic_DNA"/>
</dbReference>
<dbReference type="RefSeq" id="WP_000089857.1">
    <property type="nucleotide sequence ID" value="NC_002952.2"/>
</dbReference>
<dbReference type="SMR" id="Q6GH72"/>
<dbReference type="KEGG" id="sar:SAR1344"/>
<dbReference type="HOGENOM" id="CLU_010645_2_0_9"/>
<dbReference type="Proteomes" id="UP000000596">
    <property type="component" value="Chromosome"/>
</dbReference>
<dbReference type="GO" id="GO:0005737">
    <property type="term" value="C:cytoplasm"/>
    <property type="evidence" value="ECO:0007669"/>
    <property type="project" value="TreeGrafter"/>
</dbReference>
<dbReference type="GO" id="GO:0004096">
    <property type="term" value="F:catalase activity"/>
    <property type="evidence" value="ECO:0007669"/>
    <property type="project" value="UniProtKB-EC"/>
</dbReference>
<dbReference type="GO" id="GO:0020037">
    <property type="term" value="F:heme binding"/>
    <property type="evidence" value="ECO:0007669"/>
    <property type="project" value="InterPro"/>
</dbReference>
<dbReference type="GO" id="GO:0046872">
    <property type="term" value="F:metal ion binding"/>
    <property type="evidence" value="ECO:0007669"/>
    <property type="project" value="UniProtKB-KW"/>
</dbReference>
<dbReference type="GO" id="GO:0042744">
    <property type="term" value="P:hydrogen peroxide catabolic process"/>
    <property type="evidence" value="ECO:0007669"/>
    <property type="project" value="UniProtKB-KW"/>
</dbReference>
<dbReference type="GO" id="GO:0042542">
    <property type="term" value="P:response to hydrogen peroxide"/>
    <property type="evidence" value="ECO:0007669"/>
    <property type="project" value="TreeGrafter"/>
</dbReference>
<dbReference type="CDD" id="cd08156">
    <property type="entry name" value="catalase_clade_3"/>
    <property type="match status" value="1"/>
</dbReference>
<dbReference type="FunFam" id="2.40.180.10:FF:000001">
    <property type="entry name" value="Catalase"/>
    <property type="match status" value="1"/>
</dbReference>
<dbReference type="Gene3D" id="2.40.180.10">
    <property type="entry name" value="Catalase core domain"/>
    <property type="match status" value="1"/>
</dbReference>
<dbReference type="InterPro" id="IPR018028">
    <property type="entry name" value="Catalase"/>
</dbReference>
<dbReference type="InterPro" id="IPR040333">
    <property type="entry name" value="Catalase_3"/>
</dbReference>
<dbReference type="InterPro" id="IPR024708">
    <property type="entry name" value="Catalase_AS"/>
</dbReference>
<dbReference type="InterPro" id="IPR024711">
    <property type="entry name" value="Catalase_clade1/3"/>
</dbReference>
<dbReference type="InterPro" id="IPR011614">
    <property type="entry name" value="Catalase_core"/>
</dbReference>
<dbReference type="InterPro" id="IPR002226">
    <property type="entry name" value="Catalase_haem_BS"/>
</dbReference>
<dbReference type="InterPro" id="IPR010582">
    <property type="entry name" value="Catalase_immune_responsive"/>
</dbReference>
<dbReference type="InterPro" id="IPR020835">
    <property type="entry name" value="Catalase_sf"/>
</dbReference>
<dbReference type="PANTHER" id="PTHR11465">
    <property type="entry name" value="CATALASE"/>
    <property type="match status" value="1"/>
</dbReference>
<dbReference type="PANTHER" id="PTHR11465:SF61">
    <property type="entry name" value="CATALASE"/>
    <property type="match status" value="1"/>
</dbReference>
<dbReference type="Pfam" id="PF00199">
    <property type="entry name" value="Catalase"/>
    <property type="match status" value="1"/>
</dbReference>
<dbReference type="Pfam" id="PF06628">
    <property type="entry name" value="Catalase-rel"/>
    <property type="match status" value="1"/>
</dbReference>
<dbReference type="PIRSF" id="PIRSF038928">
    <property type="entry name" value="Catalase_clade1-3"/>
    <property type="match status" value="1"/>
</dbReference>
<dbReference type="PRINTS" id="PR00067">
    <property type="entry name" value="CATALASE"/>
</dbReference>
<dbReference type="SMART" id="SM01060">
    <property type="entry name" value="Catalase"/>
    <property type="match status" value="1"/>
</dbReference>
<dbReference type="SUPFAM" id="SSF56634">
    <property type="entry name" value="Heme-dependent catalase-like"/>
    <property type="match status" value="1"/>
</dbReference>
<dbReference type="PROSITE" id="PS00437">
    <property type="entry name" value="CATALASE_1"/>
    <property type="match status" value="1"/>
</dbReference>
<dbReference type="PROSITE" id="PS00438">
    <property type="entry name" value="CATALASE_2"/>
    <property type="match status" value="1"/>
</dbReference>
<dbReference type="PROSITE" id="PS51402">
    <property type="entry name" value="CATALASE_3"/>
    <property type="match status" value="1"/>
</dbReference>
<sequence length="505" mass="58378">MSRQDKKLTGVFGHPVSDRENSMTAGPRGPLLMQDIYFLEQMSQFDREVIPERRMHAKGSGAFGTFTVTKDITKYTNAKIFSEIGKQTEMFARFSTVAGERGAADAERDIRGFALKFYTEEGNWDLVGNNTPVFFFRDPKLFVSLNRAVKRDPRTNMRDAQNNWDFWTGLPEALHQVTILMSDRGIPKDLRHMHGFGSHTYSMYNDSGERVWVKFHFRTQQGIENLTDEVAAEIIATDRDSSQRDLFEAIEKGDYPKWTMYIQVMTEEQAKNHKDNPFDLTKVWYHDEYPLIEVGEFELNRNPDNYFMDVEQAAFAPTNIIPGLDFSPDKMLQGRLFSYGDAQRYRLGVNHWQIPVNQPKGVGIENICPFSRDGQMRVVDNNQGGGTHYYPNNHGKFDSQPEYKKPPFPTDGYGYEYNQRQDDDNYFEQPGKLFRLQSEDAKERIFTNTANAMEGVTDDVKRRHIRHCYKADPEYGKGVAKALGIDINSIDLETENDETYENFEK</sequence>
<proteinExistence type="inferred from homology"/>
<accession>Q6GH72</accession>
<gene>
    <name type="primary">katA</name>
    <name type="ordered locus">SAR1344</name>
</gene>
<reference key="1">
    <citation type="journal article" date="2004" name="Proc. Natl. Acad. Sci. U.S.A.">
        <title>Complete genomes of two clinical Staphylococcus aureus strains: evidence for the rapid evolution of virulence and drug resistance.</title>
        <authorList>
            <person name="Holden M.T.G."/>
            <person name="Feil E.J."/>
            <person name="Lindsay J.A."/>
            <person name="Peacock S.J."/>
            <person name="Day N.P.J."/>
            <person name="Enright M.C."/>
            <person name="Foster T.J."/>
            <person name="Moore C.E."/>
            <person name="Hurst L."/>
            <person name="Atkin R."/>
            <person name="Barron A."/>
            <person name="Bason N."/>
            <person name="Bentley S.D."/>
            <person name="Chillingworth C."/>
            <person name="Chillingworth T."/>
            <person name="Churcher C."/>
            <person name="Clark L."/>
            <person name="Corton C."/>
            <person name="Cronin A."/>
            <person name="Doggett J."/>
            <person name="Dowd L."/>
            <person name="Feltwell T."/>
            <person name="Hance Z."/>
            <person name="Harris B."/>
            <person name="Hauser H."/>
            <person name="Holroyd S."/>
            <person name="Jagels K."/>
            <person name="James K.D."/>
            <person name="Lennard N."/>
            <person name="Line A."/>
            <person name="Mayes R."/>
            <person name="Moule S."/>
            <person name="Mungall K."/>
            <person name="Ormond D."/>
            <person name="Quail M.A."/>
            <person name="Rabbinowitsch E."/>
            <person name="Rutherford K.M."/>
            <person name="Sanders M."/>
            <person name="Sharp S."/>
            <person name="Simmonds M."/>
            <person name="Stevens K."/>
            <person name="Whitehead S."/>
            <person name="Barrell B.G."/>
            <person name="Spratt B.G."/>
            <person name="Parkhill J."/>
        </authorList>
    </citation>
    <scope>NUCLEOTIDE SEQUENCE [LARGE SCALE GENOMIC DNA]</scope>
    <source>
        <strain>MRSA252</strain>
    </source>
</reference>
<evidence type="ECO:0000250" key="1"/>
<evidence type="ECO:0000255" key="2">
    <source>
        <dbReference type="PROSITE-ProRule" id="PRU10013"/>
    </source>
</evidence>
<evidence type="ECO:0000256" key="3">
    <source>
        <dbReference type="SAM" id="MobiDB-lite"/>
    </source>
</evidence>
<evidence type="ECO:0000305" key="4"/>
<organism>
    <name type="scientific">Staphylococcus aureus (strain MRSA252)</name>
    <dbReference type="NCBI Taxonomy" id="282458"/>
    <lineage>
        <taxon>Bacteria</taxon>
        <taxon>Bacillati</taxon>
        <taxon>Bacillota</taxon>
        <taxon>Bacilli</taxon>
        <taxon>Bacillales</taxon>
        <taxon>Staphylococcaceae</taxon>
        <taxon>Staphylococcus</taxon>
    </lineage>
</organism>
<feature type="chain" id="PRO_0000085000" description="Catalase">
    <location>
        <begin position="1"/>
        <end position="505"/>
    </location>
</feature>
<feature type="region of interest" description="Disordered" evidence="3">
    <location>
        <begin position="1"/>
        <end position="25"/>
    </location>
</feature>
<feature type="active site" evidence="2">
    <location>
        <position position="56"/>
    </location>
</feature>
<feature type="active site" evidence="2">
    <location>
        <position position="129"/>
    </location>
</feature>
<feature type="binding site" description="axial binding residue" evidence="1">
    <location>
        <position position="339"/>
    </location>
    <ligand>
        <name>heme</name>
        <dbReference type="ChEBI" id="CHEBI:30413"/>
    </ligand>
    <ligandPart>
        <name>Fe</name>
        <dbReference type="ChEBI" id="CHEBI:18248"/>
    </ligandPart>
</feature>
<protein>
    <recommendedName>
        <fullName>Catalase</fullName>
        <ecNumber>1.11.1.6</ecNumber>
    </recommendedName>
</protein>
<name>CATA_STAAR</name>
<keyword id="KW-0349">Heme</keyword>
<keyword id="KW-0376">Hydrogen peroxide</keyword>
<keyword id="KW-0408">Iron</keyword>
<keyword id="KW-0479">Metal-binding</keyword>
<keyword id="KW-0560">Oxidoreductase</keyword>
<keyword id="KW-0575">Peroxidase</keyword>